<gene>
    <name type="primary">Trim25</name>
    <name evidence="8" type="synonym">Efp</name>
    <name type="synonym">Zfp147</name>
    <name type="synonym">Znf147</name>
</gene>
<comment type="function">
    <text evidence="1 6">Functions as a ubiquitin E3 ligase and as an ISG15 E3 ligase. Involved in innate immune defense against viruses by mediating ubiquitination of RIGI and IFIH1. Mediates 'Lys-63'-linked polyubiquitination of the RIGI N-terminal CARD-like region and may play a role in signal transduction that leads to the production of interferons in response to viral infection. Mediates 'Lys-63'-linked polyubiquitination of IFIH1. Promotes ISGylation of 14-3-3 sigma (SFN), an adapter protein implicated in the regulation of a large spectrum signaling pathway. Mediates estrogen action in various target organs. Mediates the ubiquitination and subsequent proteasomal degradation of ZFHX3 (By similarity). Plays a role in promoting the restart of stalled replication forks via interaction with the KHDC3L-OOEP scaffold and subsequent ubiquitination of BLM, resulting in the recruitment and retainment of BLM at DNA replication forks (PubMed:29125140). Plays an essential role in the antiviral activity of ZAP/ZC3HAV1; an antiviral protein which inhibits the replication of certain viruses. Mechanistically, mediates 'Lys-63'-linked polyubiquitination of ZAP/ZC3HAV1 that is required for its optimal binding to target mRNA. Also mediates the ubiquitination of various substrates implicated in stress granule formation, nonsense-mediated mRNA decay, nucleoside synthesis and mRNA translation and stability (By similarity).</text>
</comment>
<comment type="catalytic activity">
    <reaction evidence="1">
        <text>S-ubiquitinyl-[E2 ubiquitin-conjugating enzyme]-L-cysteine + [acceptor protein]-L-lysine = [E2 ubiquitin-conjugating enzyme]-L-cysteine + N(6)-ubiquitinyl-[acceptor protein]-L-lysine.</text>
        <dbReference type="EC" id="2.3.2.27"/>
    </reaction>
</comment>
<comment type="catalytic activity">
    <reaction evidence="1">
        <text>ATP + [ISG15] + [protein]-lysine = AMP + diphosphate + [protein]-N-ISGyllysine.</text>
        <dbReference type="EC" id="6.3.2.n3"/>
    </reaction>
</comment>
<comment type="pathway">
    <text>Protein modification; protein ubiquitination.</text>
</comment>
<comment type="subunit">
    <text evidence="1 6">Forms homodimers (By similarity). Interacts (via SPRY domain) with RIGI (via CARD domain). Interacts with ZFHX3. Interacts with NLRP12; this interaction reduces the E3 ubiquitin ligase TRIM25-mediated 'Lys-63'-linked RIGI activation. Interacts with the KHDC3L/FILIA-OOEP/FLOPED scaffold complex and BLM at DNA replication forks (PubMed:29125140). Interacts with RTN3; this interaction prevents RIGI ubiquitination (By similarity). Interacts with YWHAE (By similarity).</text>
</comment>
<comment type="subcellular location">
    <subcellularLocation>
        <location evidence="1">Cytoplasm</location>
    </subcellularLocation>
    <subcellularLocation>
        <location evidence="1">Cytoplasm</location>
        <location evidence="1">Stress granule</location>
    </subcellularLocation>
    <subcellularLocation>
        <location evidence="6">Nucleus</location>
    </subcellularLocation>
    <text evidence="6">Localized to DNA replication forks.</text>
</comment>
<comment type="tissue specificity">
    <text evidence="7">Ubiquitous.</text>
</comment>
<comment type="domain">
    <text evidence="1">The RING-type zinc finger is important for ISG15 E3 ligase activity and autoISGylation. AutoISGylation negatively regulates ISG15 E3 ligase activity.</text>
</comment>
<comment type="domain">
    <text evidence="1">The C-terminal B30.2/SPRY domain interacts with the first N-terminal CARD domain of RIGI.</text>
</comment>
<comment type="PTM">
    <text evidence="1">Auto-ISGylated.</text>
</comment>
<keyword id="KW-0002">3D-structure</keyword>
<keyword id="KW-0007">Acetylation</keyword>
<keyword id="KW-0051">Antiviral defense</keyword>
<keyword id="KW-0175">Coiled coil</keyword>
<keyword id="KW-0963">Cytoplasm</keyword>
<keyword id="KW-0391">Immunity</keyword>
<keyword id="KW-0399">Innate immunity</keyword>
<keyword id="KW-1017">Isopeptide bond</keyword>
<keyword id="KW-0436">Ligase</keyword>
<keyword id="KW-0479">Metal-binding</keyword>
<keyword id="KW-0539">Nucleus</keyword>
<keyword id="KW-0597">Phosphoprotein</keyword>
<keyword id="KW-1185">Reference proteome</keyword>
<keyword id="KW-0808">Transferase</keyword>
<keyword id="KW-0832">Ubl conjugation</keyword>
<keyword id="KW-0833">Ubl conjugation pathway</keyword>
<keyword id="KW-0862">Zinc</keyword>
<keyword id="KW-0863">Zinc-finger</keyword>
<organism>
    <name type="scientific">Mus musculus</name>
    <name type="common">Mouse</name>
    <dbReference type="NCBI Taxonomy" id="10090"/>
    <lineage>
        <taxon>Eukaryota</taxon>
        <taxon>Metazoa</taxon>
        <taxon>Chordata</taxon>
        <taxon>Craniata</taxon>
        <taxon>Vertebrata</taxon>
        <taxon>Euteleostomi</taxon>
        <taxon>Mammalia</taxon>
        <taxon>Eutheria</taxon>
        <taxon>Euarchontoglires</taxon>
        <taxon>Glires</taxon>
        <taxon>Rodentia</taxon>
        <taxon>Myomorpha</taxon>
        <taxon>Muroidea</taxon>
        <taxon>Muridae</taxon>
        <taxon>Murinae</taxon>
        <taxon>Mus</taxon>
        <taxon>Mus</taxon>
    </lineage>
</organism>
<accession>Q61510</accession>
<accession>Q5SU70</accession>
<sequence>MAELNPLAEELSCSVCLELFKEPVTTPCGHNFCMSCLDETWVVQGPPYRCPQCRKVYQVRPQLQKNTVMCAVVEQFLQAEQARTPVDDWTPPARFSASSAATQVACDHCLTEIAVKTCLVCMASFCQEHLRPHFDSPAFQDHPLQSPIRDLLRRKCTQHNRLRELFCPEHGECICHICLVEHKTCSPTTLSQASADLEYKLRNKLTIMHSHINGATKALEDVRSKQQCVQDSMKRKMEQLRQEYMEMKAVIDAAETSSLRKLKEEEKRVYGKFDTIYQVLVKKKSEMQKLKAEVELIMDKGDEFEFLEKAAKLQGESTKPVYIPKIDLDHDLIMGIYQGAADLKSELKHSIKKLQKKSEEHNGSGNKGDQTQSTFKPVQPSKKTIQEKKTKKTPVAPGPPSHFSPNKLPTFGAPGQSLDSKATSPDAAPKASAAQPDSVGVKAKVLENFLTKSRTELLEYFVKVIFDYNTAHNKVSLSNKYTTASVSDGLQHYRSHPQRFTYCSQVLGLHCYKNGIHYWEVELQKNNFCGVGICYGSMERQGPESRLGRNPNSWCVEWFNNKISAWHNNVEKTLPSTKATRVGVLLNCDHGFVIFFAVTEKVHLMYKFKVDFTEALYPAFWVFSAGTTLSICSK</sequence>
<evidence type="ECO:0000250" key="1">
    <source>
        <dbReference type="UniProtKB" id="Q14258"/>
    </source>
</evidence>
<evidence type="ECO:0000255" key="2"/>
<evidence type="ECO:0000255" key="3">
    <source>
        <dbReference type="PROSITE-ProRule" id="PRU00175"/>
    </source>
</evidence>
<evidence type="ECO:0000255" key="4">
    <source>
        <dbReference type="PROSITE-ProRule" id="PRU00548"/>
    </source>
</evidence>
<evidence type="ECO:0000256" key="5">
    <source>
        <dbReference type="SAM" id="MobiDB-lite"/>
    </source>
</evidence>
<evidence type="ECO:0000269" key="6">
    <source>
    </source>
</evidence>
<evidence type="ECO:0000269" key="7">
    <source>
    </source>
</evidence>
<evidence type="ECO:0000303" key="8">
    <source>
    </source>
</evidence>
<evidence type="ECO:0000305" key="9"/>
<evidence type="ECO:0007829" key="10">
    <source>
        <dbReference type="PDB" id="4B8E"/>
    </source>
</evidence>
<protein>
    <recommendedName>
        <fullName>E3 ubiquitin/ISG15 ligase TRIM25</fullName>
        <ecNumber evidence="1">6.3.2.n3</ecNumber>
    </recommendedName>
    <alternativeName>
        <fullName evidence="8">Estrogen-responsive finger protein</fullName>
    </alternativeName>
    <alternativeName>
        <fullName>RING-type E3 ubiquitin transferase</fullName>
        <ecNumber evidence="1">2.3.2.27</ecNumber>
    </alternativeName>
    <alternativeName>
        <fullName evidence="9">RING-type E3 ubiquitin transferase TRIM25</fullName>
    </alternativeName>
    <alternativeName>
        <fullName>Tripartite motif-containing protein 25</fullName>
    </alternativeName>
    <alternativeName>
        <fullName>Ubiquitin/ISG15-conjugating enzyme TRIM25</fullName>
    </alternativeName>
    <alternativeName>
        <fullName>Zinc finger protein 147</fullName>
    </alternativeName>
</protein>
<name>TRI25_MOUSE</name>
<dbReference type="EC" id="6.3.2.n3" evidence="1"/>
<dbReference type="EC" id="2.3.2.27" evidence="1"/>
<dbReference type="EMBL" id="D63902">
    <property type="protein sequence ID" value="BAA09941.1"/>
    <property type="molecule type" value="mRNA"/>
</dbReference>
<dbReference type="EMBL" id="AK169562">
    <property type="protein sequence ID" value="BAE41230.1"/>
    <property type="molecule type" value="mRNA"/>
</dbReference>
<dbReference type="EMBL" id="AL646096">
    <property type="status" value="NOT_ANNOTATED_CDS"/>
    <property type="molecule type" value="Genomic_DNA"/>
</dbReference>
<dbReference type="CCDS" id="CCDS36278.1"/>
<dbReference type="PIR" id="I49642">
    <property type="entry name" value="I49642"/>
</dbReference>
<dbReference type="RefSeq" id="NP_033572.2">
    <property type="nucleotide sequence ID" value="NM_009546.2"/>
</dbReference>
<dbReference type="PDB" id="4B8E">
    <property type="method" value="X-ray"/>
    <property type="resolution" value="1.78 A"/>
    <property type="chains" value="A/B=440-634"/>
</dbReference>
<dbReference type="PDBsum" id="4B8E"/>
<dbReference type="SMR" id="Q61510"/>
<dbReference type="BioGRID" id="229840">
    <property type="interactions" value="7"/>
</dbReference>
<dbReference type="FunCoup" id="Q61510">
    <property type="interactions" value="2663"/>
</dbReference>
<dbReference type="IntAct" id="Q61510">
    <property type="interactions" value="1"/>
</dbReference>
<dbReference type="MINT" id="Q61510"/>
<dbReference type="STRING" id="10090.ENSMUSP00000103528"/>
<dbReference type="GlyGen" id="Q61510">
    <property type="glycosylation" value="1 site, 1 N-linked glycan (1 site)"/>
</dbReference>
<dbReference type="iPTMnet" id="Q61510"/>
<dbReference type="PhosphoSitePlus" id="Q61510"/>
<dbReference type="SwissPalm" id="Q61510"/>
<dbReference type="PaxDb" id="10090-ENSMUSP00000103528"/>
<dbReference type="PeptideAtlas" id="Q61510"/>
<dbReference type="ProteomicsDB" id="258975"/>
<dbReference type="Pumba" id="Q61510"/>
<dbReference type="Antibodypedia" id="1778">
    <property type="antibodies" value="538 antibodies from 39 providers"/>
</dbReference>
<dbReference type="DNASU" id="217069"/>
<dbReference type="Ensembl" id="ENSMUST00000107896.10">
    <property type="protein sequence ID" value="ENSMUSP00000103528.4"/>
    <property type="gene ID" value="ENSMUSG00000000275.17"/>
</dbReference>
<dbReference type="GeneID" id="217069"/>
<dbReference type="KEGG" id="mmu:217069"/>
<dbReference type="UCSC" id="uc007kwc.1">
    <property type="organism name" value="mouse"/>
</dbReference>
<dbReference type="AGR" id="MGI:102749"/>
<dbReference type="CTD" id="7706"/>
<dbReference type="MGI" id="MGI:102749">
    <property type="gene designation" value="Trim25"/>
</dbReference>
<dbReference type="VEuPathDB" id="HostDB:ENSMUSG00000000275"/>
<dbReference type="eggNOG" id="KOG2177">
    <property type="taxonomic scope" value="Eukaryota"/>
</dbReference>
<dbReference type="GeneTree" id="ENSGT00940000160741"/>
<dbReference type="InParanoid" id="Q61510"/>
<dbReference type="OMA" id="ESTGIMG"/>
<dbReference type="OrthoDB" id="6270329at2759"/>
<dbReference type="PhylomeDB" id="Q61510"/>
<dbReference type="TreeFam" id="TF351086"/>
<dbReference type="Reactome" id="R-MMU-1169408">
    <property type="pathway name" value="ISG15 antiviral mechanism"/>
</dbReference>
<dbReference type="Reactome" id="R-MMU-5656169">
    <property type="pathway name" value="Termination of translesion DNA synthesis"/>
</dbReference>
<dbReference type="Reactome" id="R-MMU-9833482">
    <property type="pathway name" value="PKR-mediated signaling"/>
</dbReference>
<dbReference type="Reactome" id="R-MMU-9909505">
    <property type="pathway name" value="Modulation of host responses by IFN-stimulated genes"/>
</dbReference>
<dbReference type="UniPathway" id="UPA00143"/>
<dbReference type="BioGRID-ORCS" id="217069">
    <property type="hits" value="3 hits in 80 CRISPR screens"/>
</dbReference>
<dbReference type="ChiTaRS" id="Trim25">
    <property type="organism name" value="mouse"/>
</dbReference>
<dbReference type="EvolutionaryTrace" id="Q61510"/>
<dbReference type="PRO" id="PR:Q61510"/>
<dbReference type="Proteomes" id="UP000000589">
    <property type="component" value="Chromosome 11"/>
</dbReference>
<dbReference type="RNAct" id="Q61510">
    <property type="molecule type" value="protein"/>
</dbReference>
<dbReference type="Bgee" id="ENSMUSG00000000275">
    <property type="expression patterns" value="Expressed in paneth cell and 266 other cell types or tissues"/>
</dbReference>
<dbReference type="ExpressionAtlas" id="Q61510">
    <property type="expression patterns" value="baseline and differential"/>
</dbReference>
<dbReference type="GO" id="GO:0005737">
    <property type="term" value="C:cytoplasm"/>
    <property type="evidence" value="ECO:0000314"/>
    <property type="project" value="MGI"/>
</dbReference>
<dbReference type="GO" id="GO:0010494">
    <property type="term" value="C:cytoplasmic stress granule"/>
    <property type="evidence" value="ECO:0007669"/>
    <property type="project" value="UniProtKB-SubCell"/>
</dbReference>
<dbReference type="GO" id="GO:0005829">
    <property type="term" value="C:cytosol"/>
    <property type="evidence" value="ECO:0007669"/>
    <property type="project" value="Ensembl"/>
</dbReference>
<dbReference type="GO" id="GO:0016604">
    <property type="term" value="C:nuclear body"/>
    <property type="evidence" value="ECO:0007669"/>
    <property type="project" value="Ensembl"/>
</dbReference>
<dbReference type="GO" id="GO:0005634">
    <property type="term" value="C:nucleus"/>
    <property type="evidence" value="ECO:0000314"/>
    <property type="project" value="UniProtKB"/>
</dbReference>
<dbReference type="GO" id="GO:0016874">
    <property type="term" value="F:ligase activity"/>
    <property type="evidence" value="ECO:0007669"/>
    <property type="project" value="UniProtKB-KW"/>
</dbReference>
<dbReference type="GO" id="GO:0039552">
    <property type="term" value="F:RIG-I binding"/>
    <property type="evidence" value="ECO:0007669"/>
    <property type="project" value="Ensembl"/>
</dbReference>
<dbReference type="GO" id="GO:0003713">
    <property type="term" value="F:transcription coactivator activity"/>
    <property type="evidence" value="ECO:0007669"/>
    <property type="project" value="Ensembl"/>
</dbReference>
<dbReference type="GO" id="GO:0061630">
    <property type="term" value="F:ubiquitin protein ligase activity"/>
    <property type="evidence" value="ECO:0007669"/>
    <property type="project" value="Ensembl"/>
</dbReference>
<dbReference type="GO" id="GO:0008270">
    <property type="term" value="F:zinc ion binding"/>
    <property type="evidence" value="ECO:0007669"/>
    <property type="project" value="UniProtKB-KW"/>
</dbReference>
<dbReference type="GO" id="GO:0140374">
    <property type="term" value="P:antiviral innate immune response"/>
    <property type="evidence" value="ECO:0007669"/>
    <property type="project" value="Ensembl"/>
</dbReference>
<dbReference type="GO" id="GO:1990830">
    <property type="term" value="P:cellular response to leukemia inhibitory factor"/>
    <property type="evidence" value="ECO:0000270"/>
    <property type="project" value="MGI"/>
</dbReference>
<dbReference type="GO" id="GO:0002753">
    <property type="term" value="P:cytoplasmic pattern recognition receptor signaling pathway"/>
    <property type="evidence" value="ECO:0007669"/>
    <property type="project" value="Ensembl"/>
</dbReference>
<dbReference type="GO" id="GO:0036503">
    <property type="term" value="P:ERAD pathway"/>
    <property type="evidence" value="ECO:0007669"/>
    <property type="project" value="Ensembl"/>
</dbReference>
<dbReference type="GO" id="GO:0046597">
    <property type="term" value="P:host-mediated suppression of symbiont invasion"/>
    <property type="evidence" value="ECO:0000314"/>
    <property type="project" value="UniProtKB"/>
</dbReference>
<dbReference type="GO" id="GO:0045087">
    <property type="term" value="P:innate immune response"/>
    <property type="evidence" value="ECO:0000314"/>
    <property type="project" value="UniProtKB"/>
</dbReference>
<dbReference type="GO" id="GO:0043123">
    <property type="term" value="P:positive regulation of canonical NF-kappaB signal transduction"/>
    <property type="evidence" value="ECO:0007669"/>
    <property type="project" value="Ensembl"/>
</dbReference>
<dbReference type="GO" id="GO:0070936">
    <property type="term" value="P:protein K48-linked ubiquitination"/>
    <property type="evidence" value="ECO:0007669"/>
    <property type="project" value="Ensembl"/>
</dbReference>
<dbReference type="GO" id="GO:0006513">
    <property type="term" value="P:protein monoubiquitination"/>
    <property type="evidence" value="ECO:0007669"/>
    <property type="project" value="Ensembl"/>
</dbReference>
<dbReference type="GO" id="GO:0032880">
    <property type="term" value="P:regulation of protein localization"/>
    <property type="evidence" value="ECO:0000315"/>
    <property type="project" value="UniProtKB"/>
</dbReference>
<dbReference type="GO" id="GO:0046596">
    <property type="term" value="P:regulation of viral entry into host cell"/>
    <property type="evidence" value="ECO:0007669"/>
    <property type="project" value="Ensembl"/>
</dbReference>
<dbReference type="GO" id="GO:0043627">
    <property type="term" value="P:response to estrogen"/>
    <property type="evidence" value="ECO:0007669"/>
    <property type="project" value="Ensembl"/>
</dbReference>
<dbReference type="GO" id="GO:0006979">
    <property type="term" value="P:response to oxidative stress"/>
    <property type="evidence" value="ECO:0007669"/>
    <property type="project" value="Ensembl"/>
</dbReference>
<dbReference type="GO" id="GO:0033280">
    <property type="term" value="P:response to vitamin D"/>
    <property type="evidence" value="ECO:0007669"/>
    <property type="project" value="Ensembl"/>
</dbReference>
<dbReference type="GO" id="GO:0044790">
    <property type="term" value="P:suppression of viral release by host"/>
    <property type="evidence" value="ECO:0000314"/>
    <property type="project" value="UniProtKB"/>
</dbReference>
<dbReference type="GO" id="GO:0006511">
    <property type="term" value="P:ubiquitin-dependent protein catabolic process"/>
    <property type="evidence" value="ECO:0007669"/>
    <property type="project" value="Ensembl"/>
</dbReference>
<dbReference type="GO" id="GO:0019076">
    <property type="term" value="P:viral release from host cell"/>
    <property type="evidence" value="ECO:0007669"/>
    <property type="project" value="Ensembl"/>
</dbReference>
<dbReference type="CDD" id="cd19842">
    <property type="entry name" value="Bbox1_TRIM25-like_C-IV"/>
    <property type="match status" value="1"/>
</dbReference>
<dbReference type="CDD" id="cd19776">
    <property type="entry name" value="Bbox2_TRIM25_C-IV"/>
    <property type="match status" value="1"/>
</dbReference>
<dbReference type="CDD" id="cd16597">
    <property type="entry name" value="RING-HC_TRIM25_C-IV"/>
    <property type="match status" value="1"/>
</dbReference>
<dbReference type="CDD" id="cd13736">
    <property type="entry name" value="SPRY_PRY_TRIM25"/>
    <property type="match status" value="1"/>
</dbReference>
<dbReference type="FunFam" id="3.30.40.10:FF:000438">
    <property type="entry name" value="Bloodthirsty-related gene family, member 25"/>
    <property type="match status" value="1"/>
</dbReference>
<dbReference type="FunFam" id="2.60.120.920:FF:000045">
    <property type="entry name" value="E3 ubiquitin/ISG15 ligase TRIM25"/>
    <property type="match status" value="1"/>
</dbReference>
<dbReference type="FunFam" id="4.10.830.40:FF:000007">
    <property type="entry name" value="E3 ubiquitin/ISG15 ligase TRIM25"/>
    <property type="match status" value="1"/>
</dbReference>
<dbReference type="Gene3D" id="2.60.120.920">
    <property type="match status" value="1"/>
</dbReference>
<dbReference type="Gene3D" id="4.10.830.40">
    <property type="match status" value="1"/>
</dbReference>
<dbReference type="Gene3D" id="3.30.160.60">
    <property type="entry name" value="Classic Zinc Finger"/>
    <property type="match status" value="1"/>
</dbReference>
<dbReference type="Gene3D" id="3.30.40.10">
    <property type="entry name" value="Zinc/RING finger domain, C3HC4 (zinc finger)"/>
    <property type="match status" value="1"/>
</dbReference>
<dbReference type="InterPro" id="IPR001870">
    <property type="entry name" value="B30.2/SPRY"/>
</dbReference>
<dbReference type="InterPro" id="IPR043136">
    <property type="entry name" value="B30.2/SPRY_sf"/>
</dbReference>
<dbReference type="InterPro" id="IPR003879">
    <property type="entry name" value="Butyrophylin_SPRY"/>
</dbReference>
<dbReference type="InterPro" id="IPR013320">
    <property type="entry name" value="ConA-like_dom_sf"/>
</dbReference>
<dbReference type="InterPro" id="IPR051051">
    <property type="entry name" value="E3_ubiq-ligase_TRIM/RNF"/>
</dbReference>
<dbReference type="InterPro" id="IPR006574">
    <property type="entry name" value="PRY"/>
</dbReference>
<dbReference type="InterPro" id="IPR003877">
    <property type="entry name" value="SPRY_dom"/>
</dbReference>
<dbReference type="InterPro" id="IPR042753">
    <property type="entry name" value="TRIM25_SPRY_PRY"/>
</dbReference>
<dbReference type="InterPro" id="IPR027370">
    <property type="entry name" value="Znf-RING_euk"/>
</dbReference>
<dbReference type="InterPro" id="IPR001841">
    <property type="entry name" value="Znf_RING"/>
</dbReference>
<dbReference type="InterPro" id="IPR013083">
    <property type="entry name" value="Znf_RING/FYVE/PHD"/>
</dbReference>
<dbReference type="InterPro" id="IPR017907">
    <property type="entry name" value="Znf_RING_CS"/>
</dbReference>
<dbReference type="PANTHER" id="PTHR25465">
    <property type="entry name" value="B-BOX DOMAIN CONTAINING"/>
    <property type="match status" value="1"/>
</dbReference>
<dbReference type="PANTHER" id="PTHR25465:SF77">
    <property type="entry name" value="E3 UBIQUITIN_ISG15 LIGASE TRIM25"/>
    <property type="match status" value="1"/>
</dbReference>
<dbReference type="Pfam" id="PF13765">
    <property type="entry name" value="PRY"/>
    <property type="match status" value="1"/>
</dbReference>
<dbReference type="Pfam" id="PF00622">
    <property type="entry name" value="SPRY"/>
    <property type="match status" value="1"/>
</dbReference>
<dbReference type="Pfam" id="PF13445">
    <property type="entry name" value="zf-RING_UBOX"/>
    <property type="match status" value="1"/>
</dbReference>
<dbReference type="PRINTS" id="PR01407">
    <property type="entry name" value="BUTYPHLNCDUF"/>
</dbReference>
<dbReference type="SMART" id="SM00589">
    <property type="entry name" value="PRY"/>
    <property type="match status" value="1"/>
</dbReference>
<dbReference type="SMART" id="SM00184">
    <property type="entry name" value="RING"/>
    <property type="match status" value="1"/>
</dbReference>
<dbReference type="SMART" id="SM00449">
    <property type="entry name" value="SPRY"/>
    <property type="match status" value="1"/>
</dbReference>
<dbReference type="SUPFAM" id="SSF57845">
    <property type="entry name" value="B-box zinc-binding domain"/>
    <property type="match status" value="1"/>
</dbReference>
<dbReference type="SUPFAM" id="SSF49899">
    <property type="entry name" value="Concanavalin A-like lectins/glucanases"/>
    <property type="match status" value="1"/>
</dbReference>
<dbReference type="SUPFAM" id="SSF57850">
    <property type="entry name" value="RING/U-box"/>
    <property type="match status" value="1"/>
</dbReference>
<dbReference type="PROSITE" id="PS50188">
    <property type="entry name" value="B302_SPRY"/>
    <property type="match status" value="1"/>
</dbReference>
<dbReference type="PROSITE" id="PS00518">
    <property type="entry name" value="ZF_RING_1"/>
    <property type="match status" value="1"/>
</dbReference>
<dbReference type="PROSITE" id="PS50089">
    <property type="entry name" value="ZF_RING_2"/>
    <property type="match status" value="1"/>
</dbReference>
<proteinExistence type="evidence at protein level"/>
<reference key="1">
    <citation type="journal article" date="1995" name="J. Biol. Chem.">
        <title>Molecular cloning, structure, and expression of mouse estrogen-responsive finger protein Efp. Co-localization with estrogen receptor mRNA in target organs.</title>
        <authorList>
            <person name="Orimo A."/>
            <person name="Inoue S."/>
            <person name="Ikeda K."/>
            <person name="Noji S."/>
            <person name="Muramatsu M."/>
        </authorList>
    </citation>
    <scope>NUCLEOTIDE SEQUENCE [MRNA]</scope>
    <scope>TISSUE SPECIFICITY</scope>
    <source>
        <tissue>Ovary</tissue>
        <tissue>Placenta</tissue>
        <tissue>Uterus</tissue>
    </source>
</reference>
<reference key="2">
    <citation type="journal article" date="2005" name="Science">
        <title>The transcriptional landscape of the mammalian genome.</title>
        <authorList>
            <person name="Carninci P."/>
            <person name="Kasukawa T."/>
            <person name="Katayama S."/>
            <person name="Gough J."/>
            <person name="Frith M.C."/>
            <person name="Maeda N."/>
            <person name="Oyama R."/>
            <person name="Ravasi T."/>
            <person name="Lenhard B."/>
            <person name="Wells C."/>
            <person name="Kodzius R."/>
            <person name="Shimokawa K."/>
            <person name="Bajic V.B."/>
            <person name="Brenner S.E."/>
            <person name="Batalov S."/>
            <person name="Forrest A.R."/>
            <person name="Zavolan M."/>
            <person name="Davis M.J."/>
            <person name="Wilming L.G."/>
            <person name="Aidinis V."/>
            <person name="Allen J.E."/>
            <person name="Ambesi-Impiombato A."/>
            <person name="Apweiler R."/>
            <person name="Aturaliya R.N."/>
            <person name="Bailey T.L."/>
            <person name="Bansal M."/>
            <person name="Baxter L."/>
            <person name="Beisel K.W."/>
            <person name="Bersano T."/>
            <person name="Bono H."/>
            <person name="Chalk A.M."/>
            <person name="Chiu K.P."/>
            <person name="Choudhary V."/>
            <person name="Christoffels A."/>
            <person name="Clutterbuck D.R."/>
            <person name="Crowe M.L."/>
            <person name="Dalla E."/>
            <person name="Dalrymple B.P."/>
            <person name="de Bono B."/>
            <person name="Della Gatta G."/>
            <person name="di Bernardo D."/>
            <person name="Down T."/>
            <person name="Engstrom P."/>
            <person name="Fagiolini M."/>
            <person name="Faulkner G."/>
            <person name="Fletcher C.F."/>
            <person name="Fukushima T."/>
            <person name="Furuno M."/>
            <person name="Futaki S."/>
            <person name="Gariboldi M."/>
            <person name="Georgii-Hemming P."/>
            <person name="Gingeras T.R."/>
            <person name="Gojobori T."/>
            <person name="Green R.E."/>
            <person name="Gustincich S."/>
            <person name="Harbers M."/>
            <person name="Hayashi Y."/>
            <person name="Hensch T.K."/>
            <person name="Hirokawa N."/>
            <person name="Hill D."/>
            <person name="Huminiecki L."/>
            <person name="Iacono M."/>
            <person name="Ikeo K."/>
            <person name="Iwama A."/>
            <person name="Ishikawa T."/>
            <person name="Jakt M."/>
            <person name="Kanapin A."/>
            <person name="Katoh M."/>
            <person name="Kawasawa Y."/>
            <person name="Kelso J."/>
            <person name="Kitamura H."/>
            <person name="Kitano H."/>
            <person name="Kollias G."/>
            <person name="Krishnan S.P."/>
            <person name="Kruger A."/>
            <person name="Kummerfeld S.K."/>
            <person name="Kurochkin I.V."/>
            <person name="Lareau L.F."/>
            <person name="Lazarevic D."/>
            <person name="Lipovich L."/>
            <person name="Liu J."/>
            <person name="Liuni S."/>
            <person name="McWilliam S."/>
            <person name="Madan Babu M."/>
            <person name="Madera M."/>
            <person name="Marchionni L."/>
            <person name="Matsuda H."/>
            <person name="Matsuzawa S."/>
            <person name="Miki H."/>
            <person name="Mignone F."/>
            <person name="Miyake S."/>
            <person name="Morris K."/>
            <person name="Mottagui-Tabar S."/>
            <person name="Mulder N."/>
            <person name="Nakano N."/>
            <person name="Nakauchi H."/>
            <person name="Ng P."/>
            <person name="Nilsson R."/>
            <person name="Nishiguchi S."/>
            <person name="Nishikawa S."/>
            <person name="Nori F."/>
            <person name="Ohara O."/>
            <person name="Okazaki Y."/>
            <person name="Orlando V."/>
            <person name="Pang K.C."/>
            <person name="Pavan W.J."/>
            <person name="Pavesi G."/>
            <person name="Pesole G."/>
            <person name="Petrovsky N."/>
            <person name="Piazza S."/>
            <person name="Reed J."/>
            <person name="Reid J.F."/>
            <person name="Ring B.Z."/>
            <person name="Ringwald M."/>
            <person name="Rost B."/>
            <person name="Ruan Y."/>
            <person name="Salzberg S.L."/>
            <person name="Sandelin A."/>
            <person name="Schneider C."/>
            <person name="Schoenbach C."/>
            <person name="Sekiguchi K."/>
            <person name="Semple C.A."/>
            <person name="Seno S."/>
            <person name="Sessa L."/>
            <person name="Sheng Y."/>
            <person name="Shibata Y."/>
            <person name="Shimada H."/>
            <person name="Shimada K."/>
            <person name="Silva D."/>
            <person name="Sinclair B."/>
            <person name="Sperling S."/>
            <person name="Stupka E."/>
            <person name="Sugiura K."/>
            <person name="Sultana R."/>
            <person name="Takenaka Y."/>
            <person name="Taki K."/>
            <person name="Tammoja K."/>
            <person name="Tan S.L."/>
            <person name="Tang S."/>
            <person name="Taylor M.S."/>
            <person name="Tegner J."/>
            <person name="Teichmann S.A."/>
            <person name="Ueda H.R."/>
            <person name="van Nimwegen E."/>
            <person name="Verardo R."/>
            <person name="Wei C.L."/>
            <person name="Yagi K."/>
            <person name="Yamanishi H."/>
            <person name="Zabarovsky E."/>
            <person name="Zhu S."/>
            <person name="Zimmer A."/>
            <person name="Hide W."/>
            <person name="Bult C."/>
            <person name="Grimmond S.M."/>
            <person name="Teasdale R.D."/>
            <person name="Liu E.T."/>
            <person name="Brusic V."/>
            <person name="Quackenbush J."/>
            <person name="Wahlestedt C."/>
            <person name="Mattick J.S."/>
            <person name="Hume D.A."/>
            <person name="Kai C."/>
            <person name="Sasaki D."/>
            <person name="Tomaru Y."/>
            <person name="Fukuda S."/>
            <person name="Kanamori-Katayama M."/>
            <person name="Suzuki M."/>
            <person name="Aoki J."/>
            <person name="Arakawa T."/>
            <person name="Iida J."/>
            <person name="Imamura K."/>
            <person name="Itoh M."/>
            <person name="Kato T."/>
            <person name="Kawaji H."/>
            <person name="Kawagashira N."/>
            <person name="Kawashima T."/>
            <person name="Kojima M."/>
            <person name="Kondo S."/>
            <person name="Konno H."/>
            <person name="Nakano K."/>
            <person name="Ninomiya N."/>
            <person name="Nishio T."/>
            <person name="Okada M."/>
            <person name="Plessy C."/>
            <person name="Shibata K."/>
            <person name="Shiraki T."/>
            <person name="Suzuki S."/>
            <person name="Tagami M."/>
            <person name="Waki K."/>
            <person name="Watahiki A."/>
            <person name="Okamura-Oho Y."/>
            <person name="Suzuki H."/>
            <person name="Kawai J."/>
            <person name="Hayashizaki Y."/>
        </authorList>
    </citation>
    <scope>NUCLEOTIDE SEQUENCE [LARGE SCALE MRNA]</scope>
    <source>
        <strain>C57BL/6J</strain>
        <tissue>Thymus</tissue>
    </source>
</reference>
<reference key="3">
    <citation type="journal article" date="2009" name="PLoS Biol.">
        <title>Lineage-specific biology revealed by a finished genome assembly of the mouse.</title>
        <authorList>
            <person name="Church D.M."/>
            <person name="Goodstadt L."/>
            <person name="Hillier L.W."/>
            <person name="Zody M.C."/>
            <person name="Goldstein S."/>
            <person name="She X."/>
            <person name="Bult C.J."/>
            <person name="Agarwala R."/>
            <person name="Cherry J.L."/>
            <person name="DiCuccio M."/>
            <person name="Hlavina W."/>
            <person name="Kapustin Y."/>
            <person name="Meric P."/>
            <person name="Maglott D."/>
            <person name="Birtle Z."/>
            <person name="Marques A.C."/>
            <person name="Graves T."/>
            <person name="Zhou S."/>
            <person name="Teague B."/>
            <person name="Potamousis K."/>
            <person name="Churas C."/>
            <person name="Place M."/>
            <person name="Herschleb J."/>
            <person name="Runnheim R."/>
            <person name="Forrest D."/>
            <person name="Amos-Landgraf J."/>
            <person name="Schwartz D.C."/>
            <person name="Cheng Z."/>
            <person name="Lindblad-Toh K."/>
            <person name="Eichler E.E."/>
            <person name="Ponting C.P."/>
        </authorList>
    </citation>
    <scope>NUCLEOTIDE SEQUENCE [LARGE SCALE GENOMIC DNA]</scope>
    <source>
        <strain>C57BL/6J</strain>
    </source>
</reference>
<reference key="4">
    <citation type="journal article" date="2010" name="Cell">
        <title>A tissue-specific atlas of mouse protein phosphorylation and expression.</title>
        <authorList>
            <person name="Huttlin E.L."/>
            <person name="Jedrychowski M.P."/>
            <person name="Elias J.E."/>
            <person name="Goswami T."/>
            <person name="Rad R."/>
            <person name="Beausoleil S.A."/>
            <person name="Villen J."/>
            <person name="Haas W."/>
            <person name="Sowa M.E."/>
            <person name="Gygi S.P."/>
        </authorList>
    </citation>
    <scope>IDENTIFICATION BY MASS SPECTROMETRY [LARGE SCALE ANALYSIS]</scope>
    <source>
        <tissue>Kidney</tissue>
        <tissue>Liver</tissue>
        <tissue>Lung</tissue>
        <tissue>Pancreas</tissue>
        <tissue>Spleen</tissue>
    </source>
</reference>
<reference key="5">
    <citation type="journal article" date="2018" name="Cell Res.">
        <title>Mouse embryonic stem cells have increased capacity for replication fork restart driven by the specific Filia-Floped protein complex.</title>
        <authorList>
            <person name="Zhao B."/>
            <person name="Zhang W."/>
            <person name="Cun Y."/>
            <person name="Li J."/>
            <person name="Liu Y."/>
            <person name="Gao J."/>
            <person name="Zhu H."/>
            <person name="Zhou H."/>
            <person name="Zhang R."/>
            <person name="Zheng P."/>
        </authorList>
    </citation>
    <scope>FUNCTION</scope>
    <scope>INTERACTION WITH OOEP; KHDC3 AND BLM</scope>
    <scope>SUBCELLULAR LOCATION</scope>
</reference>
<feature type="chain" id="PRO_0000056234" description="E3 ubiquitin/ISG15 ligase TRIM25">
    <location>
        <begin position="1"/>
        <end position="634"/>
    </location>
</feature>
<feature type="domain" description="B30.2/SPRY" evidence="4">
    <location>
        <begin position="444"/>
        <end position="634"/>
    </location>
</feature>
<feature type="zinc finger region" description="RING-type" evidence="3">
    <location>
        <begin position="13"/>
        <end position="54"/>
    </location>
</feature>
<feature type="region of interest" description="Disordered" evidence="5">
    <location>
        <begin position="353"/>
        <end position="437"/>
    </location>
</feature>
<feature type="coiled-coil region" evidence="2">
    <location>
        <begin position="215"/>
        <end position="305"/>
    </location>
</feature>
<feature type="compositionally biased region" description="Polar residues" evidence="5">
    <location>
        <begin position="363"/>
        <end position="376"/>
    </location>
</feature>
<feature type="modified residue" description="Phosphothreonine" evidence="1">
    <location>
        <position position="90"/>
    </location>
</feature>
<feature type="modified residue" description="Phosphoserine" evidence="1">
    <location>
        <position position="99"/>
    </location>
</feature>
<feature type="modified residue" description="N6-acetyllysine" evidence="1">
    <location>
        <position position="272"/>
    </location>
</feature>
<feature type="modified residue" description="Phosphotyrosine" evidence="1">
    <location>
        <position position="277"/>
    </location>
</feature>
<feature type="modified residue" description="N6-acetyllysine" evidence="1">
    <location>
        <position position="572"/>
    </location>
</feature>
<feature type="cross-link" description="Glycyl lysine isopeptide (Lys-Gly) (interchain with G-Cter in ISG15)" evidence="1">
    <location>
        <position position="116"/>
    </location>
</feature>
<feature type="sequence conflict" description="In Ref. 1; BAA09941." evidence="9" ref="1">
    <original>M</original>
    <variation>T</variation>
    <location>
        <position position="34"/>
    </location>
</feature>
<feature type="sequence conflict" description="In Ref. 1; BAA09941." evidence="9" ref="1">
    <original>L</original>
    <variation>F</variation>
    <location>
        <position position="165"/>
    </location>
</feature>
<feature type="sequence conflict" description="In Ref. 1; BAA09941." evidence="9" ref="1">
    <original>K</original>
    <variation>R</variation>
    <location>
        <position position="261"/>
    </location>
</feature>
<feature type="sequence conflict" description="In Ref. 1; BAA09941." evidence="9" ref="1">
    <original>V</original>
    <variation>I</variation>
    <location>
        <position position="439"/>
    </location>
</feature>
<feature type="helix" evidence="10">
    <location>
        <begin position="441"/>
        <end position="450"/>
    </location>
</feature>
<feature type="helix" evidence="10">
    <location>
        <begin position="454"/>
        <end position="457"/>
    </location>
</feature>
<feature type="helix" evidence="10">
    <location>
        <begin position="458"/>
        <end position="460"/>
    </location>
</feature>
<feature type="turn" evidence="10">
    <location>
        <begin position="468"/>
        <end position="470"/>
    </location>
</feature>
<feature type="strand" evidence="10">
    <location>
        <begin position="475"/>
        <end position="478"/>
    </location>
</feature>
<feature type="turn" evidence="10">
    <location>
        <begin position="479"/>
        <end position="482"/>
    </location>
</feature>
<feature type="strand" evidence="10">
    <location>
        <begin position="483"/>
        <end position="486"/>
    </location>
</feature>
<feature type="strand" evidence="10">
    <location>
        <begin position="501"/>
        <end position="509"/>
    </location>
</feature>
<feature type="strand" evidence="10">
    <location>
        <begin position="514"/>
        <end position="523"/>
    </location>
</feature>
<feature type="strand" evidence="10">
    <location>
        <begin position="528"/>
        <end position="535"/>
    </location>
</feature>
<feature type="strand" evidence="10">
    <location>
        <begin position="540"/>
        <end position="542"/>
    </location>
</feature>
<feature type="helix" evidence="10">
    <location>
        <begin position="543"/>
        <end position="545"/>
    </location>
</feature>
<feature type="strand" evidence="10">
    <location>
        <begin position="553"/>
        <end position="559"/>
    </location>
</feature>
<feature type="strand" evidence="10">
    <location>
        <begin position="562"/>
        <end position="567"/>
    </location>
</feature>
<feature type="strand" evidence="10">
    <location>
        <begin position="570"/>
        <end position="574"/>
    </location>
</feature>
<feature type="strand" evidence="10">
    <location>
        <begin position="581"/>
        <end position="587"/>
    </location>
</feature>
<feature type="turn" evidence="10">
    <location>
        <begin position="588"/>
        <end position="591"/>
    </location>
</feature>
<feature type="strand" evidence="10">
    <location>
        <begin position="592"/>
        <end position="609"/>
    </location>
</feature>
<feature type="strand" evidence="10">
    <location>
        <begin position="616"/>
        <end position="624"/>
    </location>
</feature>
<feature type="strand" evidence="10">
    <location>
        <begin position="628"/>
        <end position="631"/>
    </location>
</feature>